<protein>
    <recommendedName>
        <fullName>UAP56-interacting factor</fullName>
    </recommendedName>
    <alternativeName>
        <fullName>Forty-two-three domain-containing protein 1</fullName>
        <shortName>Protein 40-2-3</shortName>
    </alternativeName>
</protein>
<evidence type="ECO:0000250" key="1"/>
<evidence type="ECO:0000256" key="2">
    <source>
        <dbReference type="SAM" id="MobiDB-lite"/>
    </source>
</evidence>
<evidence type="ECO:0000305" key="3"/>
<proteinExistence type="evidence at transcript level"/>
<accession>Q4V7Q7</accession>
<organism>
    <name type="scientific">Xenopus laevis</name>
    <name type="common">African clawed frog</name>
    <dbReference type="NCBI Taxonomy" id="8355"/>
    <lineage>
        <taxon>Eukaryota</taxon>
        <taxon>Metazoa</taxon>
        <taxon>Chordata</taxon>
        <taxon>Craniata</taxon>
        <taxon>Vertebrata</taxon>
        <taxon>Euteleostomi</taxon>
        <taxon>Amphibia</taxon>
        <taxon>Batrachia</taxon>
        <taxon>Anura</taxon>
        <taxon>Pipoidea</taxon>
        <taxon>Pipidae</taxon>
        <taxon>Xenopodinae</taxon>
        <taxon>Xenopus</taxon>
        <taxon>Xenopus</taxon>
    </lineage>
</organism>
<name>UIF_XENLA</name>
<sequence>MAPLKTSVSDTIDKIDMSLDDIIKLNKQEQNRKQLKGRYNGSFRQFRNSWGRWGAQHTSGAGNNLRSQGLRKRPYGVKTGLAMRKMASWKGISPLNHQPLVRNSPGQLVSFRKRLNPQRSPDSGVKTSSSLQRYYLRSSSYAPTNTFRSGFRMDQQRETRQATFLSRRGLKVQTLMDMDQHLDLPELSKTPPWRTSVSSGGSLTVSIDNPSAVTLPSSLGSRLPRPPFPFLTKKEGSETKVPKGVPLEFDINSVAKQSGITLNERFKILKEQRLAQAFTKGSRFVTVG</sequence>
<comment type="function">
    <text evidence="1">Required for mRNA export from the nucleus to the cytoplasm. Acts as an adapter that uses the ddx39b/uap56-nfx1 pathway to ensure efficient mRNA export and delivering to the nuclear pore (By similarity).</text>
</comment>
<comment type="subcellular location">
    <subcellularLocation>
        <location evidence="1">Nucleus</location>
        <location evidence="1">Nucleoplasm</location>
    </subcellularLocation>
    <subcellularLocation>
        <location evidence="1">Nucleus speckle</location>
    </subcellularLocation>
</comment>
<comment type="similarity">
    <text evidence="3">Belongs to the UIF family.</text>
</comment>
<dbReference type="EMBL" id="BC097769">
    <property type="protein sequence ID" value="AAH97769.1"/>
    <property type="molecule type" value="mRNA"/>
</dbReference>
<dbReference type="RefSeq" id="NP_001089514.1">
    <property type="nucleotide sequence ID" value="NM_001096045.1"/>
</dbReference>
<dbReference type="DNASU" id="734567"/>
<dbReference type="GeneID" id="734567"/>
<dbReference type="KEGG" id="xla:734567"/>
<dbReference type="AGR" id="Xenbase:XB-GENE-1015374"/>
<dbReference type="CTD" id="734567"/>
<dbReference type="Xenbase" id="XB-GENE-1015374">
    <property type="gene designation" value="fyttd1.S"/>
</dbReference>
<dbReference type="OMA" id="NGTRQFR"/>
<dbReference type="OrthoDB" id="9938627at2759"/>
<dbReference type="Proteomes" id="UP000186698">
    <property type="component" value="Chromosome 5S"/>
</dbReference>
<dbReference type="Bgee" id="734567">
    <property type="expression patterns" value="Expressed in blastula and 19 other cell types or tissues"/>
</dbReference>
<dbReference type="GO" id="GO:0016607">
    <property type="term" value="C:nuclear speck"/>
    <property type="evidence" value="ECO:0000250"/>
    <property type="project" value="UniProtKB"/>
</dbReference>
<dbReference type="GO" id="GO:0005654">
    <property type="term" value="C:nucleoplasm"/>
    <property type="evidence" value="ECO:0000250"/>
    <property type="project" value="UniProtKB"/>
</dbReference>
<dbReference type="GO" id="GO:0003729">
    <property type="term" value="F:mRNA binding"/>
    <property type="evidence" value="ECO:0000250"/>
    <property type="project" value="UniProtKB"/>
</dbReference>
<dbReference type="GO" id="GO:0006406">
    <property type="term" value="P:mRNA export from nucleus"/>
    <property type="evidence" value="ECO:0000250"/>
    <property type="project" value="UniProtKB"/>
</dbReference>
<dbReference type="InterPro" id="IPR009782">
    <property type="entry name" value="FYTTD1"/>
</dbReference>
<dbReference type="PANTHER" id="PTHR21038">
    <property type="entry name" value="40-2-3 PROTEIN-RELATED"/>
    <property type="match status" value="1"/>
</dbReference>
<dbReference type="PANTHER" id="PTHR21038:SF2">
    <property type="entry name" value="UAP56-INTERACTING FACTOR"/>
    <property type="match status" value="1"/>
</dbReference>
<dbReference type="Pfam" id="PF07078">
    <property type="entry name" value="FYTT"/>
    <property type="match status" value="1"/>
</dbReference>
<reference key="1">
    <citation type="submission" date="2005-06" db="EMBL/GenBank/DDBJ databases">
        <authorList>
            <consortium name="NIH - Xenopus Gene Collection (XGC) project"/>
        </authorList>
    </citation>
    <scope>NUCLEOTIDE SEQUENCE [LARGE SCALE MRNA]</scope>
    <source>
        <tissue>Egg</tissue>
    </source>
</reference>
<gene>
    <name type="primary">fyttd1</name>
    <name type="synonym">uif</name>
</gene>
<keyword id="KW-0509">mRNA transport</keyword>
<keyword id="KW-0539">Nucleus</keyword>
<keyword id="KW-1185">Reference proteome</keyword>
<keyword id="KW-0694">RNA-binding</keyword>
<keyword id="KW-0813">Transport</keyword>
<feature type="chain" id="PRO_0000287444" description="UAP56-interacting factor">
    <location>
        <begin position="1"/>
        <end position="288"/>
    </location>
</feature>
<feature type="region of interest" description="Disordered" evidence="2">
    <location>
        <begin position="183"/>
        <end position="202"/>
    </location>
</feature>
<feature type="short sequence motif" description="UAP56-binding motif">
    <location>
        <begin position="11"/>
        <end position="29"/>
    </location>
</feature>